<keyword id="KW-0002">3D-structure</keyword>
<keyword id="KW-0028">Amino-acid biosynthesis</keyword>
<keyword id="KW-0963">Cytoplasm</keyword>
<keyword id="KW-0378">Hydrolase</keyword>
<keyword id="KW-0460">Magnesium</keyword>
<keyword id="KW-0479">Metal-binding</keyword>
<keyword id="KW-0486">Methionine biosynthesis</keyword>
<keyword id="KW-0539">Nucleus</keyword>
<keyword id="KW-1185">Reference proteome</keyword>
<protein>
    <recommendedName>
        <fullName evidence="1">Enolase-phosphatase E1</fullName>
        <ecNumber evidence="1">3.1.3.77</ecNumber>
    </recommendedName>
    <alternativeName>
        <fullName evidence="1">2,3-diketo-5-methylthio-1-phosphopentane phosphatase</fullName>
    </alternativeName>
    <alternativeName>
        <fullName evidence="1">Unknown transcript 4 protein</fullName>
    </alternativeName>
</protein>
<name>ENOPH_YEAST</name>
<gene>
    <name evidence="1" type="primary">UTR4</name>
    <name type="ordered locus">YEL038W</name>
    <name type="ORF">SYGP-ORF20</name>
</gene>
<sequence length="227" mass="25187">MGDNYSTYLLDIEGTVCPISFVKETLFPYFTNKVPQLVQQDTRDSPVSNILSQFHIDNKEQLQAHILELVAKDVKDPILKQLQGYVWAHGYESGQIKAPVYADAIDFIKRKKRVFIYSSGSVKAQKLLFGYVQDPNAPAHDSLDLNSYIDGYFDINTSGKKTETQSYANILRDIGAKASEVLFLSDNPLELDAAAGVGIATGLASRPGNAPVPDGQKYQVYKNFETL</sequence>
<feature type="chain" id="PRO_0000065746" description="Enolase-phosphatase E1">
    <location>
        <begin position="1"/>
        <end position="227"/>
    </location>
</feature>
<feature type="binding site" evidence="1 4">
    <location>
        <position position="11"/>
    </location>
    <ligand>
        <name>Mg(2+)</name>
        <dbReference type="ChEBI" id="CHEBI:18420"/>
    </ligand>
</feature>
<feature type="binding site" evidence="1 4">
    <location>
        <position position="13"/>
    </location>
    <ligand>
        <name>Mg(2+)</name>
        <dbReference type="ChEBI" id="CHEBI:18420"/>
    </ligand>
</feature>
<feature type="binding site" evidence="1">
    <location>
        <begin position="118"/>
        <end position="119"/>
    </location>
    <ligand>
        <name>substrate</name>
    </ligand>
</feature>
<feature type="binding site" evidence="1">
    <location>
        <position position="161"/>
    </location>
    <ligand>
        <name>substrate</name>
    </ligand>
</feature>
<feature type="binding site" evidence="1 4">
    <location>
        <position position="186"/>
    </location>
    <ligand>
        <name>Mg(2+)</name>
        <dbReference type="ChEBI" id="CHEBI:18420"/>
    </ligand>
</feature>
<feature type="sequence conflict" description="In Ref. 1; AAA34939/AAD13973/AAB28443." evidence="5" ref="1">
    <original>ID</original>
    <variation>MH</variation>
    <location>
        <begin position="56"/>
        <end position="57"/>
    </location>
</feature>
<feature type="sequence conflict" description="In Ref. 1; AAA34939/AAD13973/AAB28443." evidence="5" ref="1">
    <original>S</original>
    <variation>T</variation>
    <location>
        <position position="179"/>
    </location>
</feature>
<feature type="strand" evidence="6">
    <location>
        <begin position="6"/>
        <end position="10"/>
    </location>
</feature>
<feature type="turn" evidence="6">
    <location>
        <begin position="14"/>
        <end position="16"/>
    </location>
</feature>
<feature type="helix" evidence="6">
    <location>
        <begin position="21"/>
        <end position="24"/>
    </location>
</feature>
<feature type="helix" evidence="6">
    <location>
        <begin position="26"/>
        <end position="39"/>
    </location>
</feature>
<feature type="helix" evidence="6">
    <location>
        <begin position="46"/>
        <end position="52"/>
    </location>
</feature>
<feature type="helix" evidence="6">
    <location>
        <begin position="59"/>
        <end position="71"/>
    </location>
</feature>
<feature type="helix" evidence="6">
    <location>
        <begin position="77"/>
        <end position="92"/>
    </location>
</feature>
<feature type="helix" evidence="6">
    <location>
        <begin position="102"/>
        <end position="110"/>
    </location>
</feature>
<feature type="strand" evidence="6">
    <location>
        <begin position="114"/>
        <end position="117"/>
    </location>
</feature>
<feature type="helix" evidence="6">
    <location>
        <begin position="122"/>
        <end position="130"/>
    </location>
</feature>
<feature type="helix" evidence="6">
    <location>
        <begin position="146"/>
        <end position="148"/>
    </location>
</feature>
<feature type="strand" evidence="6">
    <location>
        <begin position="151"/>
        <end position="153"/>
    </location>
</feature>
<feature type="helix" evidence="6">
    <location>
        <begin position="155"/>
        <end position="158"/>
    </location>
</feature>
<feature type="helix" evidence="6">
    <location>
        <begin position="164"/>
        <end position="174"/>
    </location>
</feature>
<feature type="helix" evidence="6">
    <location>
        <begin position="178"/>
        <end position="180"/>
    </location>
</feature>
<feature type="strand" evidence="6">
    <location>
        <begin position="181"/>
        <end position="186"/>
    </location>
</feature>
<feature type="helix" evidence="6">
    <location>
        <begin position="188"/>
        <end position="195"/>
    </location>
</feature>
<feature type="turn" evidence="6">
    <location>
        <begin position="196"/>
        <end position="198"/>
    </location>
</feature>
<feature type="strand" evidence="6">
    <location>
        <begin position="200"/>
        <end position="204"/>
    </location>
</feature>
<feature type="strand" evidence="6">
    <location>
        <begin position="220"/>
        <end position="222"/>
    </location>
</feature>
<proteinExistence type="evidence at protein level"/>
<organism>
    <name type="scientific">Saccharomyces cerevisiae (strain ATCC 204508 / S288c)</name>
    <name type="common">Baker's yeast</name>
    <dbReference type="NCBI Taxonomy" id="559292"/>
    <lineage>
        <taxon>Eukaryota</taxon>
        <taxon>Fungi</taxon>
        <taxon>Dikarya</taxon>
        <taxon>Ascomycota</taxon>
        <taxon>Saccharomycotina</taxon>
        <taxon>Saccharomycetes</taxon>
        <taxon>Saccharomycetales</taxon>
        <taxon>Saccharomycetaceae</taxon>
        <taxon>Saccharomyces</taxon>
    </lineage>
</organism>
<reference key="1">
    <citation type="journal article" date="1993" name="J. Mol. Biol.">
        <title>The gene clusters ARC and COR on chromosomes 5 and 10, respectively, of Saccharomyces cerevisiae share a common ancestry.</title>
        <authorList>
            <person name="Melnick L."/>
            <person name="Sherman F."/>
        </authorList>
    </citation>
    <scope>NUCLEOTIDE SEQUENCE [GENOMIC DNA / MRNA]</scope>
    <source>
        <strain>B-6441</strain>
    </source>
</reference>
<reference key="2">
    <citation type="journal article" date="1997" name="Nature">
        <title>The nucleotide sequence of Saccharomyces cerevisiae chromosome V.</title>
        <authorList>
            <person name="Dietrich F.S."/>
            <person name="Mulligan J.T."/>
            <person name="Hennessy K.M."/>
            <person name="Yelton M.A."/>
            <person name="Allen E."/>
            <person name="Araujo R."/>
            <person name="Aviles E."/>
            <person name="Berno A."/>
            <person name="Brennan T."/>
            <person name="Carpenter J."/>
            <person name="Chen E."/>
            <person name="Cherry J.M."/>
            <person name="Chung E."/>
            <person name="Duncan M."/>
            <person name="Guzman E."/>
            <person name="Hartzell G."/>
            <person name="Hunicke-Smith S."/>
            <person name="Hyman R.W."/>
            <person name="Kayser A."/>
            <person name="Komp C."/>
            <person name="Lashkari D."/>
            <person name="Lew H."/>
            <person name="Lin D."/>
            <person name="Mosedale D."/>
            <person name="Nakahara K."/>
            <person name="Namath A."/>
            <person name="Norgren R."/>
            <person name="Oefner P."/>
            <person name="Oh C."/>
            <person name="Petel F.X."/>
            <person name="Roberts D."/>
            <person name="Sehl P."/>
            <person name="Schramm S."/>
            <person name="Shogren T."/>
            <person name="Smith V."/>
            <person name="Taylor P."/>
            <person name="Wei Y."/>
            <person name="Botstein D."/>
            <person name="Davis R.W."/>
        </authorList>
    </citation>
    <scope>NUCLEOTIDE SEQUENCE [LARGE SCALE GENOMIC DNA]</scope>
    <source>
        <strain>ATCC 204508 / S288c</strain>
    </source>
</reference>
<reference key="3">
    <citation type="journal article" date="2014" name="G3 (Bethesda)">
        <title>The reference genome sequence of Saccharomyces cerevisiae: Then and now.</title>
        <authorList>
            <person name="Engel S.R."/>
            <person name="Dietrich F.S."/>
            <person name="Fisk D.G."/>
            <person name="Binkley G."/>
            <person name="Balakrishnan R."/>
            <person name="Costanzo M.C."/>
            <person name="Dwight S.S."/>
            <person name="Hitz B.C."/>
            <person name="Karra K."/>
            <person name="Nash R.S."/>
            <person name="Weng S."/>
            <person name="Wong E.D."/>
            <person name="Lloyd P."/>
            <person name="Skrzypek M.S."/>
            <person name="Miyasato S.R."/>
            <person name="Simison M."/>
            <person name="Cherry J.M."/>
        </authorList>
    </citation>
    <scope>GENOME REANNOTATION</scope>
    <source>
        <strain>ATCC 204508 / S288c</strain>
    </source>
</reference>
<reference key="4">
    <citation type="journal article" date="2003" name="Nature">
        <title>Sequencing and comparison of yeast species to identify genes and regulatory elements.</title>
        <authorList>
            <person name="Kellis M."/>
            <person name="Patterson N."/>
            <person name="Endrizzi M."/>
            <person name="Birren B.W."/>
            <person name="Lander E.S."/>
        </authorList>
    </citation>
    <scope>IDENTIFICATION OF PROBABLE INITIATION SITE</scope>
</reference>
<reference key="5">
    <citation type="journal article" date="2003" name="Nature">
        <title>Global analysis of protein localization in budding yeast.</title>
        <authorList>
            <person name="Huh W.-K."/>
            <person name="Falvo J.V."/>
            <person name="Gerke L.C."/>
            <person name="Carroll A.S."/>
            <person name="Howson R.W."/>
            <person name="Weissman J.S."/>
            <person name="O'Shea E.K."/>
        </authorList>
    </citation>
    <scope>SUBCELLULAR LOCATION [LARGE SCALE ANALYSIS]</scope>
</reference>
<reference key="6">
    <citation type="journal article" date="2003" name="Nature">
        <title>Global analysis of protein expression in yeast.</title>
        <authorList>
            <person name="Ghaemmaghami S."/>
            <person name="Huh W.-K."/>
            <person name="Bower K."/>
            <person name="Howson R.W."/>
            <person name="Belle A."/>
            <person name="Dephoure N."/>
            <person name="O'Shea E.K."/>
            <person name="Weissman J.S."/>
        </authorList>
    </citation>
    <scope>LEVEL OF PROTEIN EXPRESSION [LARGE SCALE ANALYSIS]</scope>
</reference>
<reference key="7">
    <citation type="submission" date="2006-03" db="PDB data bank">
        <title>Crystal structure of UTR4 protein (unknown transcript 4 protein) (YEL038w) from Saccharomyces cerevisiae at 2.28 A resolution.</title>
        <authorList>
            <consortium name="Joint center for structural genomics (JCSG)"/>
        </authorList>
    </citation>
    <scope>X-RAY CRYSTALLOGRAPHY (2.28 ANGSTROMS) IN COMPLEX WITH MAGNESIUM</scope>
</reference>
<dbReference type="EC" id="3.1.3.77" evidence="1"/>
<dbReference type="EMBL" id="L22173">
    <property type="protein sequence ID" value="AAA34939.1"/>
    <property type="status" value="ALT_SEQ"/>
    <property type="molecule type" value="Genomic_DNA"/>
</dbReference>
<dbReference type="EMBL" id="S65964">
    <property type="protein sequence ID" value="AAD13973.1"/>
    <property type="status" value="ALT_SEQ"/>
    <property type="molecule type" value="Genomic_DNA"/>
</dbReference>
<dbReference type="EMBL" id="S66121">
    <property type="protein sequence ID" value="AAB28443.1"/>
    <property type="status" value="ALT_SEQ"/>
    <property type="molecule type" value="mRNA"/>
</dbReference>
<dbReference type="EMBL" id="U18779">
    <property type="protein sequence ID" value="AAB65004.1"/>
    <property type="status" value="ALT_INIT"/>
    <property type="molecule type" value="Genomic_DNA"/>
</dbReference>
<dbReference type="EMBL" id="BK006939">
    <property type="protein sequence ID" value="DAA07615.1"/>
    <property type="molecule type" value="Genomic_DNA"/>
</dbReference>
<dbReference type="PIR" id="S30843">
    <property type="entry name" value="S30843"/>
</dbReference>
<dbReference type="RefSeq" id="NP_010876.2">
    <property type="nucleotide sequence ID" value="NM_001178853.1"/>
</dbReference>
<dbReference type="PDB" id="2G80">
    <property type="method" value="X-ray"/>
    <property type="resolution" value="2.28 A"/>
    <property type="chains" value="A/B/C/D=1-227"/>
</dbReference>
<dbReference type="PDBsum" id="2G80"/>
<dbReference type="SMR" id="P32626"/>
<dbReference type="BioGRID" id="36691">
    <property type="interactions" value="35"/>
</dbReference>
<dbReference type="DIP" id="DIP-5487N"/>
<dbReference type="FunCoup" id="P32626">
    <property type="interactions" value="744"/>
</dbReference>
<dbReference type="STRING" id="4932.YEL038W"/>
<dbReference type="iPTMnet" id="P32626"/>
<dbReference type="PaxDb" id="4932-YEL038W"/>
<dbReference type="PeptideAtlas" id="P32626"/>
<dbReference type="EnsemblFungi" id="YEL038W_mRNA">
    <property type="protein sequence ID" value="YEL038W"/>
    <property type="gene ID" value="YEL038W"/>
</dbReference>
<dbReference type="GeneID" id="856673"/>
<dbReference type="KEGG" id="sce:YEL038W"/>
<dbReference type="AGR" id="SGD:S000000764"/>
<dbReference type="SGD" id="S000000764">
    <property type="gene designation" value="UTR4"/>
</dbReference>
<dbReference type="VEuPathDB" id="FungiDB:YEL038W"/>
<dbReference type="eggNOG" id="KOG2630">
    <property type="taxonomic scope" value="Eukaryota"/>
</dbReference>
<dbReference type="GeneTree" id="ENSGT00440000039914"/>
<dbReference type="HOGENOM" id="CLU_023273_1_1_1"/>
<dbReference type="InParanoid" id="P32626"/>
<dbReference type="OMA" id="LQGMVWE"/>
<dbReference type="OrthoDB" id="272500at2759"/>
<dbReference type="BioCyc" id="YEAST:MONOMER3O-175"/>
<dbReference type="Reactome" id="R-SCE-1237112">
    <property type="pathway name" value="Methionine salvage pathway"/>
</dbReference>
<dbReference type="UniPathway" id="UPA00904">
    <property type="reaction ID" value="UER00876"/>
</dbReference>
<dbReference type="UniPathway" id="UPA00904">
    <property type="reaction ID" value="UER00877"/>
</dbReference>
<dbReference type="BioGRID-ORCS" id="856673">
    <property type="hits" value="0 hits in 10 CRISPR screens"/>
</dbReference>
<dbReference type="EvolutionaryTrace" id="P32626"/>
<dbReference type="PRO" id="PR:P32626"/>
<dbReference type="Proteomes" id="UP000002311">
    <property type="component" value="Chromosome V"/>
</dbReference>
<dbReference type="RNAct" id="P32626">
    <property type="molecule type" value="protein"/>
</dbReference>
<dbReference type="GO" id="GO:0005737">
    <property type="term" value="C:cytoplasm"/>
    <property type="evidence" value="ECO:0007005"/>
    <property type="project" value="SGD"/>
</dbReference>
<dbReference type="GO" id="GO:0005634">
    <property type="term" value="C:nucleus"/>
    <property type="evidence" value="ECO:0007005"/>
    <property type="project" value="SGD"/>
</dbReference>
<dbReference type="GO" id="GO:0043874">
    <property type="term" value="F:acireductone synthase activity"/>
    <property type="evidence" value="ECO:0000250"/>
    <property type="project" value="SGD"/>
</dbReference>
<dbReference type="GO" id="GO:0000287">
    <property type="term" value="F:magnesium ion binding"/>
    <property type="evidence" value="ECO:0007669"/>
    <property type="project" value="UniProtKB-UniRule"/>
</dbReference>
<dbReference type="GO" id="GO:0019509">
    <property type="term" value="P:L-methionine salvage from methylthioadenosine"/>
    <property type="evidence" value="ECO:0000315"/>
    <property type="project" value="SGD"/>
</dbReference>
<dbReference type="CDD" id="cd01629">
    <property type="entry name" value="HAD_EP"/>
    <property type="match status" value="1"/>
</dbReference>
<dbReference type="FunFam" id="3.40.50.1000:FF:000079">
    <property type="entry name" value="Enolase-phosphatase E1"/>
    <property type="match status" value="1"/>
</dbReference>
<dbReference type="Gene3D" id="1.10.720.60">
    <property type="match status" value="1"/>
</dbReference>
<dbReference type="Gene3D" id="3.40.50.1000">
    <property type="entry name" value="HAD superfamily/HAD-like"/>
    <property type="match status" value="1"/>
</dbReference>
<dbReference type="HAMAP" id="MF_03117">
    <property type="entry name" value="Salvage_MtnC_euk"/>
    <property type="match status" value="1"/>
</dbReference>
<dbReference type="InterPro" id="IPR023943">
    <property type="entry name" value="Enolase-ppase_E1"/>
</dbReference>
<dbReference type="InterPro" id="IPR027511">
    <property type="entry name" value="ENOPH1_eukaryotes"/>
</dbReference>
<dbReference type="InterPro" id="IPR036412">
    <property type="entry name" value="HAD-like_sf"/>
</dbReference>
<dbReference type="InterPro" id="IPR023214">
    <property type="entry name" value="HAD_sf"/>
</dbReference>
<dbReference type="NCBIfam" id="TIGR01691">
    <property type="entry name" value="enolase-ppase"/>
    <property type="match status" value="1"/>
</dbReference>
<dbReference type="PANTHER" id="PTHR20371">
    <property type="entry name" value="ENOLASE-PHOSPHATASE E1"/>
    <property type="match status" value="1"/>
</dbReference>
<dbReference type="PANTHER" id="PTHR20371:SF1">
    <property type="entry name" value="ENOLASE-PHOSPHATASE E1"/>
    <property type="match status" value="1"/>
</dbReference>
<dbReference type="Pfam" id="PF00702">
    <property type="entry name" value="Hydrolase"/>
    <property type="match status" value="1"/>
</dbReference>
<dbReference type="SFLD" id="SFLDG01133">
    <property type="entry name" value="C1.5.4:_Enolase-phosphatase_Li"/>
    <property type="match status" value="1"/>
</dbReference>
<dbReference type="SFLD" id="SFLDS00003">
    <property type="entry name" value="Haloacid_Dehalogenase"/>
    <property type="match status" value="1"/>
</dbReference>
<dbReference type="SUPFAM" id="SSF56784">
    <property type="entry name" value="HAD-like"/>
    <property type="match status" value="1"/>
</dbReference>
<comment type="function">
    <text evidence="1">Bifunctional enzyme that catalyzes the enolization of 2,3-diketo-5-methylthiopentyl-1-phosphate (DK-MTP-1-P) into the intermediate 2-hydroxy-3-keto-5-methylthiopentenyl-1-phosphate (HK-MTPenyl-1-P), which is then dephosphorylated to form the acireductone 1,2-dihydroxy-3-keto-5-methylthiopentene (DHK-MTPene).</text>
</comment>
<comment type="catalytic activity">
    <reaction evidence="1">
        <text>5-methylsulfanyl-2,3-dioxopentyl phosphate + H2O = 1,2-dihydroxy-5-(methylsulfanyl)pent-1-en-3-one + phosphate</text>
        <dbReference type="Rhea" id="RHEA:21700"/>
        <dbReference type="ChEBI" id="CHEBI:15377"/>
        <dbReference type="ChEBI" id="CHEBI:43474"/>
        <dbReference type="ChEBI" id="CHEBI:49252"/>
        <dbReference type="ChEBI" id="CHEBI:58828"/>
        <dbReference type="EC" id="3.1.3.77"/>
    </reaction>
</comment>
<comment type="cofactor">
    <cofactor>
        <name>Mg(2+)</name>
        <dbReference type="ChEBI" id="CHEBI:18420"/>
    </cofactor>
    <text>Binds 1 Mg(2+) ion per subunit.</text>
</comment>
<comment type="pathway">
    <text evidence="1">Amino-acid biosynthesis; L-methionine biosynthesis via salvage pathway; L-methionine from S-methyl-5-thio-alpha-D-ribose 1-phosphate: step 3/6.</text>
</comment>
<comment type="pathway">
    <text evidence="1">Amino-acid biosynthesis; L-methionine biosynthesis via salvage pathway; L-methionine from S-methyl-5-thio-alpha-D-ribose 1-phosphate: step 4/6.</text>
</comment>
<comment type="subunit">
    <text evidence="1">Monomer.</text>
</comment>
<comment type="subcellular location">
    <subcellularLocation>
        <location evidence="1 2">Cytoplasm</location>
    </subcellularLocation>
    <subcellularLocation>
        <location evidence="1 2">Nucleus</location>
    </subcellularLocation>
</comment>
<comment type="miscellaneous">
    <text evidence="3">Present with 2850 molecules/cell in log phase SD medium.</text>
</comment>
<comment type="similarity">
    <text evidence="1">Belongs to the HAD-like hydrolase superfamily. MasA/MtnC family.</text>
</comment>
<comment type="sequence caution" evidence="5">
    <conflict type="erroneous initiation">
        <sequence resource="EMBL-CDS" id="AAA34939"/>
    </conflict>
    <text>Extended N-terminus.</text>
</comment>
<comment type="sequence caution" evidence="5">
    <conflict type="frameshift">
        <sequence resource="EMBL-CDS" id="AAA34939"/>
    </conflict>
</comment>
<comment type="sequence caution" evidence="5">
    <conflict type="erroneous initiation">
        <sequence resource="EMBL-CDS" id="AAB28443"/>
    </conflict>
    <text>Extended N-terminus.</text>
</comment>
<comment type="sequence caution" evidence="5">
    <conflict type="frameshift">
        <sequence resource="EMBL-CDS" id="AAB28443"/>
    </conflict>
</comment>
<comment type="sequence caution" evidence="5">
    <conflict type="erroneous initiation">
        <sequence resource="EMBL-CDS" id="AAB65004"/>
    </conflict>
    <text>Extended N-terminus.</text>
</comment>
<comment type="sequence caution" evidence="5">
    <conflict type="erroneous initiation">
        <sequence resource="EMBL-CDS" id="AAD13973"/>
    </conflict>
    <text>Extended N-terminus.</text>
</comment>
<comment type="sequence caution" evidence="5">
    <conflict type="frameshift">
        <sequence resource="EMBL-CDS" id="AAD13973"/>
    </conflict>
</comment>
<accession>P32626</accession>
<accession>D3DLL1</accession>
<evidence type="ECO:0000255" key="1">
    <source>
        <dbReference type="HAMAP-Rule" id="MF_03117"/>
    </source>
</evidence>
<evidence type="ECO:0000269" key="2">
    <source>
    </source>
</evidence>
<evidence type="ECO:0000269" key="3">
    <source>
    </source>
</evidence>
<evidence type="ECO:0000269" key="4">
    <source ref="7"/>
</evidence>
<evidence type="ECO:0000305" key="5"/>
<evidence type="ECO:0007829" key="6">
    <source>
        <dbReference type="PDB" id="2G80"/>
    </source>
</evidence>